<comment type="function">
    <text evidence="1 2">Involved in the biosynthesis of the central metabolite phospho-alpha-D-ribosyl-1-pyrophosphate (PRPP) via the transfer of pyrophosphoryl group from ATP to 1-hydroxyl of ribose-5-phosphate (Rib-5-P). It can also use dATP as diphosphoryl donor.</text>
</comment>
<comment type="catalytic activity">
    <reaction evidence="1 2">
        <text>D-ribose 5-phosphate + ATP = 5-phospho-alpha-D-ribose 1-diphosphate + AMP + H(+)</text>
        <dbReference type="Rhea" id="RHEA:15609"/>
        <dbReference type="ChEBI" id="CHEBI:15378"/>
        <dbReference type="ChEBI" id="CHEBI:30616"/>
        <dbReference type="ChEBI" id="CHEBI:58017"/>
        <dbReference type="ChEBI" id="CHEBI:78346"/>
        <dbReference type="ChEBI" id="CHEBI:456215"/>
        <dbReference type="EC" id="2.7.6.1"/>
    </reaction>
</comment>
<comment type="cofactor">
    <cofactor evidence="1 2">
        <name>Mg(2+)</name>
        <dbReference type="ChEBI" id="CHEBI:18420"/>
    </cofactor>
    <text evidence="1 2 4">Binds 2 Mg(2+) ions per subunit (PubMed:28031352). Mn(2+) is also accepted, but the activity is less than 15% of that obtained with Mg(2+), when assayed at pH 9.5 (PubMed:16288921).</text>
</comment>
<comment type="activity regulation">
    <text evidence="2">Activated by inorganic phosphate, with a maximal activity at 190 mM. Above this concentration inorganic phosphate progressively inhibits the kinase. Completely inhibited by ADP, and partially inhibited by alpha,beta-methylene ATP (mATP). Lack of allosteric regulation.</text>
</comment>
<comment type="biophysicochemical properties">
    <kinetics>
        <KM evidence="2">2.6 mM for ATP (at pH 9 and 85 degrees Celsius)</KM>
        <KM evidence="2">2.8 mM for ribose 5-phosphate (at pH 9 and 85 degrees Celsius)</KM>
        <Vmax evidence="2">2.2 mmol/min/mg enzyme (at pH 9 and 85 degrees Celsius)</Vmax>
    </kinetics>
    <phDependence>
        <text evidence="2">Optimum pH is 9.5. The activity declines strongly above pH 10.</text>
    </phDependence>
    <temperatureDependence>
        <text evidence="2">Optimum temperature is 85 degrees Celsius. 70% of maximal activity at 72 and 95 degrees Celsius.</text>
    </temperatureDependence>
</comment>
<comment type="pathway">
    <text evidence="1 6">Metabolic intermediate biosynthesis; 5-phospho-alpha-D-ribose 1-diphosphate biosynthesis; 5-phospho-alpha-D-ribose 1-diphosphate from D-ribose 5-phosphate (route I): step 1/1.</text>
</comment>
<comment type="subunit">
    <text evidence="2">Homotetramer.</text>
</comment>
<comment type="subcellular location">
    <subcellularLocation>
        <location evidence="1">Cytoplasm</location>
    </subcellularLocation>
</comment>
<comment type="miscellaneous">
    <text evidence="6">M.jannaschii PRPP synthase is more compact than the PRPP synthase in the B.subtilis subunit. This is mainly due to truncations of eight residues at the N terminus, 14 residues at the C-terminus and to a seven-residue shorter loop.</text>
</comment>
<comment type="similarity">
    <text evidence="1 4 6">Belongs to the ribose-phosphate pyrophosphokinase family. Class III (archaeal) subfamily.</text>
</comment>
<comment type="sequence caution" evidence="5">
    <conflict type="erroneous initiation">
        <sequence resource="EMBL-CDS" id="AAB99374"/>
    </conflict>
    <text>Extended N-terminus.</text>
</comment>
<accession>Q58761</accession>
<sequence>MIVVSGSQSQNLAFKVAKLLNTKLTRVEYKRFPDNEIYVRIVDEINDDEAVIINTQKNQNDAIVETILLCDALRDEGVKKITLVAPYLAYARQDKKFNPGEAISIRALAKIYSNIVDKLITINPHETHIKDFFTIPFIYGDAVPKLAEYVKDKLNDPIVLAPDKGALEFAKTASKILNAEYDYLEKTRLSPTEIQIAPKTLDAKDRDVFIVDDIISTGGTMATAVKLLKEQGAKKIIAACVHPVLIGDALNKLYSAGVEEVVGTDTYLSEVSKVSVAEVIVDLL</sequence>
<feature type="chain" id="PRO_0000141238" description="Ribose-phosphate pyrophosphokinase">
    <location>
        <begin position="1"/>
        <end position="284"/>
    </location>
</feature>
<feature type="active site" evidence="1">
    <location>
        <position position="186"/>
    </location>
</feature>
<feature type="binding site" evidence="1 2 7">
    <location>
        <begin position="34"/>
        <end position="36"/>
    </location>
    <ligand>
        <name>ATP</name>
        <dbReference type="ChEBI" id="CHEBI:30616"/>
    </ligand>
</feature>
<feature type="binding site" evidence="1 6 7">
    <location>
        <begin position="92"/>
        <end position="93"/>
    </location>
    <ligand>
        <name>ATP</name>
        <dbReference type="ChEBI" id="CHEBI:30616"/>
    </ligand>
</feature>
<feature type="binding site" evidence="1">
    <location>
        <position position="125"/>
    </location>
    <ligand>
        <name>Mg(2+)</name>
        <dbReference type="ChEBI" id="CHEBI:18420"/>
        <label>1</label>
    </ligand>
</feature>
<feature type="binding site" evidence="1">
    <location>
        <position position="163"/>
    </location>
    <ligand>
        <name>Mg(2+)</name>
        <dbReference type="ChEBI" id="CHEBI:18420"/>
        <label>2</label>
    </ligand>
</feature>
<feature type="binding site" evidence="1">
    <location>
        <position position="188"/>
    </location>
    <ligand>
        <name>D-ribose 5-phosphate</name>
        <dbReference type="ChEBI" id="CHEBI:78346"/>
    </ligand>
</feature>
<feature type="binding site" evidence="1 2 7">
    <location>
        <position position="212"/>
    </location>
    <ligand>
        <name>D-ribose 5-phosphate</name>
        <dbReference type="ChEBI" id="CHEBI:78346"/>
    </ligand>
</feature>
<feature type="binding site" evidence="1 2 7">
    <location>
        <begin position="216"/>
        <end position="220"/>
    </location>
    <ligand>
        <name>D-ribose 5-phosphate</name>
        <dbReference type="ChEBI" id="CHEBI:78346"/>
    </ligand>
</feature>
<feature type="strand" evidence="8">
    <location>
        <begin position="2"/>
        <end position="5"/>
    </location>
</feature>
<feature type="helix" evidence="9">
    <location>
        <begin position="7"/>
        <end position="9"/>
    </location>
</feature>
<feature type="helix" evidence="8">
    <location>
        <begin position="10"/>
        <end position="19"/>
    </location>
</feature>
<feature type="strand" evidence="8">
    <location>
        <begin position="27"/>
        <end position="31"/>
    </location>
</feature>
<feature type="strand" evidence="8">
    <location>
        <begin position="37"/>
        <end position="41"/>
    </location>
</feature>
<feature type="strand" evidence="8">
    <location>
        <begin position="47"/>
        <end position="53"/>
    </location>
</feature>
<feature type="helix" evidence="8">
    <location>
        <begin position="59"/>
        <end position="74"/>
    </location>
</feature>
<feature type="turn" evidence="8">
    <location>
        <begin position="75"/>
        <end position="77"/>
    </location>
</feature>
<feature type="strand" evidence="8">
    <location>
        <begin position="80"/>
        <end position="84"/>
    </location>
</feature>
<feature type="turn" evidence="9">
    <location>
        <begin position="89"/>
        <end position="92"/>
    </location>
</feature>
<feature type="helix" evidence="8">
    <location>
        <begin position="104"/>
        <end position="115"/>
    </location>
</feature>
<feature type="strand" evidence="8">
    <location>
        <begin position="117"/>
        <end position="123"/>
    </location>
</feature>
<feature type="helix" evidence="8">
    <location>
        <begin position="127"/>
        <end position="132"/>
    </location>
</feature>
<feature type="strand" evidence="8">
    <location>
        <begin position="137"/>
        <end position="140"/>
    </location>
</feature>
<feature type="helix" evidence="8">
    <location>
        <begin position="143"/>
        <end position="150"/>
    </location>
</feature>
<feature type="turn" evidence="8">
    <location>
        <begin position="151"/>
        <end position="153"/>
    </location>
</feature>
<feature type="strand" evidence="8">
    <location>
        <begin position="158"/>
        <end position="163"/>
    </location>
</feature>
<feature type="helix" evidence="8">
    <location>
        <begin position="164"/>
        <end position="166"/>
    </location>
</feature>
<feature type="helix" evidence="8">
    <location>
        <begin position="167"/>
        <end position="177"/>
    </location>
</feature>
<feature type="strand" evidence="8">
    <location>
        <begin position="181"/>
        <end position="184"/>
    </location>
</feature>
<feature type="strand" evidence="8">
    <location>
        <begin position="198"/>
        <end position="200"/>
    </location>
</feature>
<feature type="strand" evidence="8">
    <location>
        <begin position="208"/>
        <end position="214"/>
    </location>
</feature>
<feature type="strand" evidence="8">
    <location>
        <begin position="216"/>
        <end position="218"/>
    </location>
</feature>
<feature type="helix" evidence="8">
    <location>
        <begin position="219"/>
        <end position="230"/>
    </location>
</feature>
<feature type="strand" evidence="8">
    <location>
        <begin position="235"/>
        <end position="242"/>
    </location>
</feature>
<feature type="helix" evidence="8">
    <location>
        <begin position="249"/>
        <end position="256"/>
    </location>
</feature>
<feature type="strand" evidence="8">
    <location>
        <begin position="259"/>
        <end position="264"/>
    </location>
</feature>
<feature type="strand" evidence="8">
    <location>
        <begin position="272"/>
        <end position="274"/>
    </location>
</feature>
<feature type="helix" evidence="8">
    <location>
        <begin position="277"/>
        <end position="281"/>
    </location>
</feature>
<gene>
    <name evidence="1 3" type="primary">prs</name>
    <name type="ordered locus">MJ1366</name>
</gene>
<protein>
    <recommendedName>
        <fullName evidence="1 3">Ribose-phosphate pyrophosphokinase</fullName>
        <shortName evidence="1 3">RPPK</shortName>
        <ecNumber evidence="1 2">2.7.6.1</ecNumber>
    </recommendedName>
    <alternativeName>
        <fullName evidence="1">5-phospho-D-ribosyl alpha-1-diphosphate synthase</fullName>
    </alternativeName>
    <alternativeName>
        <fullName evidence="1 3">Phosphoribosyl diphosphate synthase</fullName>
    </alternativeName>
    <alternativeName>
        <fullName evidence="1 3">Phosphoribosyl pyrophosphate synthase</fullName>
        <shortName evidence="1">P-Rib-PP synthase</shortName>
        <shortName evidence="1 3">PRPP synthase</shortName>
        <shortName evidence="1">PRPPase</shortName>
    </alternativeName>
</protein>
<organism>
    <name type="scientific">Methanocaldococcus jannaschii (strain ATCC 43067 / DSM 2661 / JAL-1 / JCM 10045 / NBRC 100440)</name>
    <name type="common">Methanococcus jannaschii</name>
    <dbReference type="NCBI Taxonomy" id="243232"/>
    <lineage>
        <taxon>Archaea</taxon>
        <taxon>Methanobacteriati</taxon>
        <taxon>Methanobacteriota</taxon>
        <taxon>Methanomada group</taxon>
        <taxon>Methanococci</taxon>
        <taxon>Methanococcales</taxon>
        <taxon>Methanocaldococcaceae</taxon>
        <taxon>Methanocaldococcus</taxon>
    </lineage>
</organism>
<dbReference type="EC" id="2.7.6.1" evidence="1 2"/>
<dbReference type="EMBL" id="L77117">
    <property type="protein sequence ID" value="AAB99374.1"/>
    <property type="status" value="ALT_INIT"/>
    <property type="molecule type" value="Genomic_DNA"/>
</dbReference>
<dbReference type="PIR" id="E64470">
    <property type="entry name" value="E64470"/>
</dbReference>
<dbReference type="RefSeq" id="WP_209320027.1">
    <property type="nucleotide sequence ID" value="NC_000909.1"/>
</dbReference>
<dbReference type="PDB" id="1U9Y">
    <property type="method" value="X-ray"/>
    <property type="resolution" value="2.65 A"/>
    <property type="chains" value="A/B/C/D=1-284"/>
</dbReference>
<dbReference type="PDB" id="1U9Z">
    <property type="method" value="X-ray"/>
    <property type="resolution" value="2.80 A"/>
    <property type="chains" value="A/B/C/D=1-284"/>
</dbReference>
<dbReference type="PDBsum" id="1U9Y"/>
<dbReference type="PDBsum" id="1U9Z"/>
<dbReference type="SMR" id="Q58761"/>
<dbReference type="FunCoup" id="Q58761">
    <property type="interactions" value="243"/>
</dbReference>
<dbReference type="STRING" id="243232.MJ_1366"/>
<dbReference type="PaxDb" id="243232-MJ_1366"/>
<dbReference type="EnsemblBacteria" id="AAB99374">
    <property type="protein sequence ID" value="AAB99374"/>
    <property type="gene ID" value="MJ_1366"/>
</dbReference>
<dbReference type="GeneID" id="1452269"/>
<dbReference type="KEGG" id="mja:MJ_1366"/>
<dbReference type="eggNOG" id="arCOG00067">
    <property type="taxonomic scope" value="Archaea"/>
</dbReference>
<dbReference type="HOGENOM" id="CLU_033546_2_2_2"/>
<dbReference type="InParanoid" id="Q58761"/>
<dbReference type="OrthoDB" id="371997at2157"/>
<dbReference type="PhylomeDB" id="Q58761"/>
<dbReference type="BRENDA" id="2.7.6.1">
    <property type="organism ID" value="3260"/>
</dbReference>
<dbReference type="SABIO-RK" id="Q58761"/>
<dbReference type="UniPathway" id="UPA00087">
    <property type="reaction ID" value="UER00172"/>
</dbReference>
<dbReference type="EvolutionaryTrace" id="Q58761"/>
<dbReference type="Proteomes" id="UP000000805">
    <property type="component" value="Chromosome"/>
</dbReference>
<dbReference type="GO" id="GO:0005737">
    <property type="term" value="C:cytoplasm"/>
    <property type="evidence" value="ECO:0000318"/>
    <property type="project" value="GO_Central"/>
</dbReference>
<dbReference type="GO" id="GO:0002189">
    <property type="term" value="C:ribose phosphate diphosphokinase complex"/>
    <property type="evidence" value="ECO:0000318"/>
    <property type="project" value="GO_Central"/>
</dbReference>
<dbReference type="GO" id="GO:0005524">
    <property type="term" value="F:ATP binding"/>
    <property type="evidence" value="ECO:0007669"/>
    <property type="project" value="UniProtKB-KW"/>
</dbReference>
<dbReference type="GO" id="GO:0016301">
    <property type="term" value="F:kinase activity"/>
    <property type="evidence" value="ECO:0007669"/>
    <property type="project" value="UniProtKB-KW"/>
</dbReference>
<dbReference type="GO" id="GO:0000287">
    <property type="term" value="F:magnesium ion binding"/>
    <property type="evidence" value="ECO:0007669"/>
    <property type="project" value="UniProtKB-UniRule"/>
</dbReference>
<dbReference type="GO" id="GO:0004749">
    <property type="term" value="F:ribose phosphate diphosphokinase activity"/>
    <property type="evidence" value="ECO:0000318"/>
    <property type="project" value="GO_Central"/>
</dbReference>
<dbReference type="GO" id="GO:0006015">
    <property type="term" value="P:5-phosphoribose 1-diphosphate biosynthetic process"/>
    <property type="evidence" value="ECO:0000318"/>
    <property type="project" value="GO_Central"/>
</dbReference>
<dbReference type="GO" id="GO:0006164">
    <property type="term" value="P:purine nucleotide biosynthetic process"/>
    <property type="evidence" value="ECO:0000318"/>
    <property type="project" value="GO_Central"/>
</dbReference>
<dbReference type="CDD" id="cd06223">
    <property type="entry name" value="PRTases_typeI"/>
    <property type="match status" value="1"/>
</dbReference>
<dbReference type="FunFam" id="3.40.50.2020:FF:000074">
    <property type="entry name" value="Ribose-phosphate pyrophosphokinase"/>
    <property type="match status" value="1"/>
</dbReference>
<dbReference type="Gene3D" id="3.40.50.2020">
    <property type="match status" value="2"/>
</dbReference>
<dbReference type="HAMAP" id="MF_00583_A">
    <property type="entry name" value="RibP_PPkinase_A"/>
    <property type="match status" value="1"/>
</dbReference>
<dbReference type="InterPro" id="IPR029099">
    <property type="entry name" value="Pribosyltran_N"/>
</dbReference>
<dbReference type="InterPro" id="IPR000836">
    <property type="entry name" value="PRibTrfase_dom"/>
</dbReference>
<dbReference type="InterPro" id="IPR029057">
    <property type="entry name" value="PRTase-like"/>
</dbReference>
<dbReference type="InterPro" id="IPR005946">
    <property type="entry name" value="Rib-P_diPkinase"/>
</dbReference>
<dbReference type="InterPro" id="IPR037514">
    <property type="entry name" value="Rib-P_diPkinase_arc"/>
</dbReference>
<dbReference type="NCBIfam" id="NF002095">
    <property type="entry name" value="PRK00934.1"/>
    <property type="match status" value="1"/>
</dbReference>
<dbReference type="NCBIfam" id="TIGR01251">
    <property type="entry name" value="ribP_PPkin"/>
    <property type="match status" value="1"/>
</dbReference>
<dbReference type="PANTHER" id="PTHR10210">
    <property type="entry name" value="RIBOSE-PHOSPHATE DIPHOSPHOKINASE FAMILY MEMBER"/>
    <property type="match status" value="1"/>
</dbReference>
<dbReference type="PANTHER" id="PTHR10210:SF32">
    <property type="entry name" value="RIBOSE-PHOSPHATE PYROPHOSPHOKINASE 2"/>
    <property type="match status" value="1"/>
</dbReference>
<dbReference type="Pfam" id="PF00156">
    <property type="entry name" value="Pribosyltran"/>
    <property type="match status" value="1"/>
</dbReference>
<dbReference type="Pfam" id="PF13793">
    <property type="entry name" value="Pribosyltran_N"/>
    <property type="match status" value="1"/>
</dbReference>
<dbReference type="SMART" id="SM01400">
    <property type="entry name" value="Pribosyltran_N"/>
    <property type="match status" value="1"/>
</dbReference>
<dbReference type="SUPFAM" id="SSF53271">
    <property type="entry name" value="PRTase-like"/>
    <property type="match status" value="2"/>
</dbReference>
<keyword id="KW-0002">3D-structure</keyword>
<keyword id="KW-0067">ATP-binding</keyword>
<keyword id="KW-0963">Cytoplasm</keyword>
<keyword id="KW-0418">Kinase</keyword>
<keyword id="KW-0460">Magnesium</keyword>
<keyword id="KW-0464">Manganese</keyword>
<keyword id="KW-0479">Metal-binding</keyword>
<keyword id="KW-0545">Nucleotide biosynthesis</keyword>
<keyword id="KW-0547">Nucleotide-binding</keyword>
<keyword id="KW-1185">Reference proteome</keyword>
<keyword id="KW-0808">Transferase</keyword>
<name>KPRS_METJA</name>
<proteinExistence type="evidence at protein level"/>
<evidence type="ECO:0000255" key="1">
    <source>
        <dbReference type="HAMAP-Rule" id="MF_00583"/>
    </source>
</evidence>
<evidence type="ECO:0000269" key="2">
    <source>
    </source>
</evidence>
<evidence type="ECO:0000303" key="3">
    <source>
    </source>
</evidence>
<evidence type="ECO:0000303" key="4">
    <source>
    </source>
</evidence>
<evidence type="ECO:0000305" key="5"/>
<evidence type="ECO:0000305" key="6">
    <source>
    </source>
</evidence>
<evidence type="ECO:0007744" key="7">
    <source>
        <dbReference type="PDB" id="1U9Z"/>
    </source>
</evidence>
<evidence type="ECO:0007829" key="8">
    <source>
        <dbReference type="PDB" id="1U9Y"/>
    </source>
</evidence>
<evidence type="ECO:0007829" key="9">
    <source>
        <dbReference type="PDB" id="1U9Z"/>
    </source>
</evidence>
<reference key="1">
    <citation type="journal article" date="1996" name="Science">
        <title>Complete genome sequence of the methanogenic archaeon, Methanococcus jannaschii.</title>
        <authorList>
            <person name="Bult C.J."/>
            <person name="White O."/>
            <person name="Olsen G.J."/>
            <person name="Zhou L."/>
            <person name="Fleischmann R.D."/>
            <person name="Sutton G.G."/>
            <person name="Blake J.A."/>
            <person name="FitzGerald L.M."/>
            <person name="Clayton R.A."/>
            <person name="Gocayne J.D."/>
            <person name="Kerlavage A.R."/>
            <person name="Dougherty B.A."/>
            <person name="Tomb J.-F."/>
            <person name="Adams M.D."/>
            <person name="Reich C.I."/>
            <person name="Overbeek R."/>
            <person name="Kirkness E.F."/>
            <person name="Weinstock K.G."/>
            <person name="Merrick J.M."/>
            <person name="Glodek A."/>
            <person name="Scott J.L."/>
            <person name="Geoghagen N.S.M."/>
            <person name="Weidman J.F."/>
            <person name="Fuhrmann J.L."/>
            <person name="Nguyen D."/>
            <person name="Utterback T.R."/>
            <person name="Kelley J.M."/>
            <person name="Peterson J.D."/>
            <person name="Sadow P.W."/>
            <person name="Hanna M.C."/>
            <person name="Cotton M.D."/>
            <person name="Roberts K.M."/>
            <person name="Hurst M.A."/>
            <person name="Kaine B.P."/>
            <person name="Borodovsky M."/>
            <person name="Klenk H.-P."/>
            <person name="Fraser C.M."/>
            <person name="Smith H.O."/>
            <person name="Woese C.R."/>
            <person name="Venter J.C."/>
        </authorList>
    </citation>
    <scope>NUCLEOTIDE SEQUENCE [LARGE SCALE GENOMIC DNA]</scope>
    <source>
        <strain>ATCC 43067 / DSM 2661 / JAL-1 / JCM 10045 / NBRC 100440</strain>
    </source>
</reference>
<reference key="2">
    <citation type="journal article" date="2017" name="Microbiol. Mol. Biol. Rev.">
        <title>Phosphoribosyl diphosphate (PRPP): biosynthesis, enzymology, utilization, and metabolic significance.</title>
        <authorList>
            <person name="Hove-Jensen B."/>
            <person name="Andersen K.R."/>
            <person name="Kilstrup M."/>
            <person name="Martinussen J."/>
            <person name="Switzer R.L."/>
            <person name="Willemoes M."/>
        </authorList>
    </citation>
    <scope>REVIEW</scope>
    <scope>COFACTOR</scope>
</reference>
<reference key="3">
    <citation type="journal article" date="2005" name="J. Mol. Biol.">
        <title>Novel class III phosphoribosyl diphosphate synthase: structure and properties of the tetrameric, phosphate-activated, non-allosterically inhibited enzyme from Methanocaldococcus jannaschii.</title>
        <authorList>
            <person name="Kadziola A."/>
            <person name="Jepsen C.H."/>
            <person name="Johansson E."/>
            <person name="McGuire J."/>
            <person name="Larsen S."/>
            <person name="Hove-Jensen B."/>
        </authorList>
    </citation>
    <scope>X-RAY CRYSTALLOGRAPHY (2.65 ANGSTROMS) IN COMPLEX WITH SUBSTRATES</scope>
    <scope>FUNCTION</scope>
    <scope>CATALYTIC ACTIVITY</scope>
    <scope>BIOPHYSICOCHEMICAL PROPERTIES</scope>
    <scope>COFACTOR</scope>
    <scope>SUBSTRATE SPECIFICITY</scope>
    <scope>ACTIVITY REGULATION</scope>
    <scope>SUBUNIT</scope>
    <scope>PATHWAY</scope>
    <source>
        <strain>ATCC 43067 / DSM 2661 / JAL-1 / JCM 10045 / NBRC 100440</strain>
    </source>
</reference>